<evidence type="ECO:0000255" key="1">
    <source>
        <dbReference type="HAMAP-Rule" id="MF_01445"/>
    </source>
</evidence>
<accession>Q88YN0</accession>
<accession>F9ULV4</accession>
<organism>
    <name type="scientific">Lactiplantibacillus plantarum (strain ATCC BAA-793 / NCIMB 8826 / WCFS1)</name>
    <name type="common">Lactobacillus plantarum</name>
    <dbReference type="NCBI Taxonomy" id="220668"/>
    <lineage>
        <taxon>Bacteria</taxon>
        <taxon>Bacillati</taxon>
        <taxon>Bacillota</taxon>
        <taxon>Bacilli</taxon>
        <taxon>Lactobacillales</taxon>
        <taxon>Lactobacillaceae</taxon>
        <taxon>Lactiplantibacillus</taxon>
    </lineage>
</organism>
<dbReference type="EC" id="2.3.1.234" evidence="1"/>
<dbReference type="EMBL" id="AL935263">
    <property type="protein sequence ID" value="CCC78193.1"/>
    <property type="molecule type" value="Genomic_DNA"/>
</dbReference>
<dbReference type="RefSeq" id="WP_011101143.1">
    <property type="nucleotide sequence ID" value="NC_004567.2"/>
</dbReference>
<dbReference type="RefSeq" id="YP_004888707.1">
    <property type="nucleotide sequence ID" value="NC_004567.2"/>
</dbReference>
<dbReference type="SMR" id="Q88YN0"/>
<dbReference type="STRING" id="220668.lp_0721"/>
<dbReference type="EnsemblBacteria" id="CCC78193">
    <property type="protein sequence ID" value="CCC78193"/>
    <property type="gene ID" value="lp_0721"/>
</dbReference>
<dbReference type="KEGG" id="lpl:lp_0721"/>
<dbReference type="PATRIC" id="fig|220668.9.peg.606"/>
<dbReference type="eggNOG" id="COG0533">
    <property type="taxonomic scope" value="Bacteria"/>
</dbReference>
<dbReference type="HOGENOM" id="CLU_023208_0_2_9"/>
<dbReference type="OrthoDB" id="9806197at2"/>
<dbReference type="PhylomeDB" id="Q88YN0"/>
<dbReference type="Proteomes" id="UP000000432">
    <property type="component" value="Chromosome"/>
</dbReference>
<dbReference type="GO" id="GO:0005737">
    <property type="term" value="C:cytoplasm"/>
    <property type="evidence" value="ECO:0007669"/>
    <property type="project" value="UniProtKB-SubCell"/>
</dbReference>
<dbReference type="GO" id="GO:0005506">
    <property type="term" value="F:iron ion binding"/>
    <property type="evidence" value="ECO:0007669"/>
    <property type="project" value="UniProtKB-UniRule"/>
</dbReference>
<dbReference type="GO" id="GO:0061711">
    <property type="term" value="F:N(6)-L-threonylcarbamoyladenine synthase activity"/>
    <property type="evidence" value="ECO:0007669"/>
    <property type="project" value="UniProtKB-EC"/>
</dbReference>
<dbReference type="GO" id="GO:0002949">
    <property type="term" value="P:tRNA threonylcarbamoyladenosine modification"/>
    <property type="evidence" value="ECO:0007669"/>
    <property type="project" value="UniProtKB-UniRule"/>
</dbReference>
<dbReference type="CDD" id="cd24133">
    <property type="entry name" value="ASKHA_NBD_TsaD_bac"/>
    <property type="match status" value="1"/>
</dbReference>
<dbReference type="FunFam" id="3.30.420.40:FF:000012">
    <property type="entry name" value="tRNA N6-adenosine threonylcarbamoyltransferase"/>
    <property type="match status" value="1"/>
</dbReference>
<dbReference type="FunFam" id="3.30.420.40:FF:000040">
    <property type="entry name" value="tRNA N6-adenosine threonylcarbamoyltransferase"/>
    <property type="match status" value="1"/>
</dbReference>
<dbReference type="Gene3D" id="3.30.420.40">
    <property type="match status" value="2"/>
</dbReference>
<dbReference type="HAMAP" id="MF_01445">
    <property type="entry name" value="TsaD"/>
    <property type="match status" value="1"/>
</dbReference>
<dbReference type="InterPro" id="IPR043129">
    <property type="entry name" value="ATPase_NBD"/>
</dbReference>
<dbReference type="InterPro" id="IPR000905">
    <property type="entry name" value="Gcp-like_dom"/>
</dbReference>
<dbReference type="InterPro" id="IPR017861">
    <property type="entry name" value="KAE1/TsaD"/>
</dbReference>
<dbReference type="InterPro" id="IPR017860">
    <property type="entry name" value="Peptidase_M22_CS"/>
</dbReference>
<dbReference type="InterPro" id="IPR022450">
    <property type="entry name" value="TsaD"/>
</dbReference>
<dbReference type="NCBIfam" id="TIGR00329">
    <property type="entry name" value="gcp_kae1"/>
    <property type="match status" value="1"/>
</dbReference>
<dbReference type="NCBIfam" id="TIGR03723">
    <property type="entry name" value="T6A_TsaD_YgjD"/>
    <property type="match status" value="1"/>
</dbReference>
<dbReference type="PANTHER" id="PTHR11735">
    <property type="entry name" value="TRNA N6-ADENOSINE THREONYLCARBAMOYLTRANSFERASE"/>
    <property type="match status" value="1"/>
</dbReference>
<dbReference type="PANTHER" id="PTHR11735:SF6">
    <property type="entry name" value="TRNA N6-ADENOSINE THREONYLCARBAMOYLTRANSFERASE, MITOCHONDRIAL"/>
    <property type="match status" value="1"/>
</dbReference>
<dbReference type="Pfam" id="PF00814">
    <property type="entry name" value="TsaD"/>
    <property type="match status" value="1"/>
</dbReference>
<dbReference type="PRINTS" id="PR00789">
    <property type="entry name" value="OSIALOPTASE"/>
</dbReference>
<dbReference type="SUPFAM" id="SSF53067">
    <property type="entry name" value="Actin-like ATPase domain"/>
    <property type="match status" value="1"/>
</dbReference>
<dbReference type="PROSITE" id="PS01016">
    <property type="entry name" value="GLYCOPROTEASE"/>
    <property type="match status" value="1"/>
</dbReference>
<sequence length="348" mass="37564">MGTVEKQNLILAFESSCDETSVAVIKDGHEILSNVIATQINSHKRFGGVVPEVASRHHIEQITICIEAALQEAHVTYADLDAVAVTYGPGLVGALLVGVNAAKTVAYAHQLPLIPVNHMAGHIYAARFVKPFEFPLMALLVSGGHTELVYMQADGQFEIIGETRDDAAGEAYDKIGRVLGVPYPAGKVIDEMAHAGHDTFKFPRAMIDEDNYDFSFSGLKSAFINTVHHADQIGATLDKNDLAASFQASVVDVLMSKTLRVLKQYPVKQLVLAGGVAANQGLRERLQQDLPAAFPDTELILAPLKLCGDNGAMIGAAGYVQYQHHQFGDATLNADPSLEFDWMPGMLK</sequence>
<protein>
    <recommendedName>
        <fullName evidence="1">tRNA N6-adenosine threonylcarbamoyltransferase</fullName>
        <ecNumber evidence="1">2.3.1.234</ecNumber>
    </recommendedName>
    <alternativeName>
        <fullName evidence="1">N6-L-threonylcarbamoyladenine synthase</fullName>
        <shortName evidence="1">t(6)A synthase</shortName>
    </alternativeName>
    <alternativeName>
        <fullName evidence="1">t(6)A37 threonylcarbamoyladenosine biosynthesis protein TsaD</fullName>
    </alternativeName>
    <alternativeName>
        <fullName evidence="1">tRNA threonylcarbamoyladenosine biosynthesis protein TsaD</fullName>
    </alternativeName>
</protein>
<gene>
    <name evidence="1" type="primary">tsaD</name>
    <name type="synonym">gcp</name>
    <name type="ordered locus">lp_0721</name>
</gene>
<name>TSAD_LACPL</name>
<feature type="chain" id="PRO_0000303396" description="tRNA N6-adenosine threonylcarbamoyltransferase">
    <location>
        <begin position="1"/>
        <end position="348"/>
    </location>
</feature>
<feature type="binding site" evidence="1">
    <location>
        <position position="118"/>
    </location>
    <ligand>
        <name>Fe cation</name>
        <dbReference type="ChEBI" id="CHEBI:24875"/>
    </ligand>
</feature>
<feature type="binding site" evidence="1">
    <location>
        <position position="122"/>
    </location>
    <ligand>
        <name>Fe cation</name>
        <dbReference type="ChEBI" id="CHEBI:24875"/>
    </ligand>
</feature>
<feature type="binding site" evidence="1">
    <location>
        <begin position="140"/>
        <end position="144"/>
    </location>
    <ligand>
        <name>substrate</name>
    </ligand>
</feature>
<feature type="binding site" evidence="1">
    <location>
        <position position="173"/>
    </location>
    <ligand>
        <name>substrate</name>
    </ligand>
</feature>
<feature type="binding site" evidence="1">
    <location>
        <position position="186"/>
    </location>
    <ligand>
        <name>substrate</name>
    </ligand>
</feature>
<feature type="binding site" evidence="1">
    <location>
        <position position="190"/>
    </location>
    <ligand>
        <name>substrate</name>
    </ligand>
</feature>
<feature type="binding site" evidence="1">
    <location>
        <position position="279"/>
    </location>
    <ligand>
        <name>substrate</name>
    </ligand>
</feature>
<feature type="binding site" evidence="1">
    <location>
        <position position="309"/>
    </location>
    <ligand>
        <name>Fe cation</name>
        <dbReference type="ChEBI" id="CHEBI:24875"/>
    </ligand>
</feature>
<proteinExistence type="inferred from homology"/>
<keyword id="KW-0012">Acyltransferase</keyword>
<keyword id="KW-0963">Cytoplasm</keyword>
<keyword id="KW-0408">Iron</keyword>
<keyword id="KW-0479">Metal-binding</keyword>
<keyword id="KW-1185">Reference proteome</keyword>
<keyword id="KW-0808">Transferase</keyword>
<keyword id="KW-0819">tRNA processing</keyword>
<comment type="function">
    <text evidence="1">Required for the formation of a threonylcarbamoyl group on adenosine at position 37 (t(6)A37) in tRNAs that read codons beginning with adenine. Is involved in the transfer of the threonylcarbamoyl moiety of threonylcarbamoyl-AMP (TC-AMP) to the N6 group of A37, together with TsaE and TsaB. TsaD likely plays a direct catalytic role in this reaction.</text>
</comment>
<comment type="catalytic activity">
    <reaction evidence="1">
        <text>L-threonylcarbamoyladenylate + adenosine(37) in tRNA = N(6)-L-threonylcarbamoyladenosine(37) in tRNA + AMP + H(+)</text>
        <dbReference type="Rhea" id="RHEA:37059"/>
        <dbReference type="Rhea" id="RHEA-COMP:10162"/>
        <dbReference type="Rhea" id="RHEA-COMP:10163"/>
        <dbReference type="ChEBI" id="CHEBI:15378"/>
        <dbReference type="ChEBI" id="CHEBI:73682"/>
        <dbReference type="ChEBI" id="CHEBI:74411"/>
        <dbReference type="ChEBI" id="CHEBI:74418"/>
        <dbReference type="ChEBI" id="CHEBI:456215"/>
        <dbReference type="EC" id="2.3.1.234"/>
    </reaction>
</comment>
<comment type="cofactor">
    <cofactor evidence="1">
        <name>Fe(2+)</name>
        <dbReference type="ChEBI" id="CHEBI:29033"/>
    </cofactor>
    <text evidence="1">Binds 1 Fe(2+) ion per subunit.</text>
</comment>
<comment type="subcellular location">
    <subcellularLocation>
        <location evidence="1">Cytoplasm</location>
    </subcellularLocation>
</comment>
<comment type="similarity">
    <text evidence="1">Belongs to the KAE1 / TsaD family.</text>
</comment>
<reference key="1">
    <citation type="journal article" date="2003" name="Proc. Natl. Acad. Sci. U.S.A.">
        <title>Complete genome sequence of Lactobacillus plantarum WCFS1.</title>
        <authorList>
            <person name="Kleerebezem M."/>
            <person name="Boekhorst J."/>
            <person name="van Kranenburg R."/>
            <person name="Molenaar D."/>
            <person name="Kuipers O.P."/>
            <person name="Leer R."/>
            <person name="Tarchini R."/>
            <person name="Peters S.A."/>
            <person name="Sandbrink H.M."/>
            <person name="Fiers M.W.E.J."/>
            <person name="Stiekema W."/>
            <person name="Klein Lankhorst R.M."/>
            <person name="Bron P.A."/>
            <person name="Hoffer S.M."/>
            <person name="Nierop Groot M.N."/>
            <person name="Kerkhoven R."/>
            <person name="De Vries M."/>
            <person name="Ursing B."/>
            <person name="De Vos W.M."/>
            <person name="Siezen R.J."/>
        </authorList>
    </citation>
    <scope>NUCLEOTIDE SEQUENCE [LARGE SCALE GENOMIC DNA]</scope>
    <source>
        <strain>ATCC BAA-793 / NCIMB 8826 / WCFS1</strain>
    </source>
</reference>
<reference key="2">
    <citation type="journal article" date="2012" name="J. Bacteriol.">
        <title>Complete resequencing and reannotation of the Lactobacillus plantarum WCFS1 genome.</title>
        <authorList>
            <person name="Siezen R.J."/>
            <person name="Francke C."/>
            <person name="Renckens B."/>
            <person name="Boekhorst J."/>
            <person name="Wels M."/>
            <person name="Kleerebezem M."/>
            <person name="van Hijum S.A."/>
        </authorList>
    </citation>
    <scope>NUCLEOTIDE SEQUENCE [LARGE SCALE GENOMIC DNA]</scope>
    <scope>GENOME REANNOTATION</scope>
    <source>
        <strain>ATCC BAA-793 / NCIMB 8826 / WCFS1</strain>
    </source>
</reference>